<dbReference type="EMBL" id="CR543861">
    <property type="protein sequence ID" value="CAG69828.1"/>
    <property type="molecule type" value="Genomic_DNA"/>
</dbReference>
<dbReference type="RefSeq" id="WP_004924314.1">
    <property type="nucleotide sequence ID" value="NC_005966.1"/>
</dbReference>
<dbReference type="SMR" id="Q6F7Y7"/>
<dbReference type="STRING" id="202950.GCA_001485005_02788"/>
<dbReference type="GeneID" id="45235350"/>
<dbReference type="KEGG" id="aci:ACIAD3137"/>
<dbReference type="eggNOG" id="COG1666">
    <property type="taxonomic scope" value="Bacteria"/>
</dbReference>
<dbReference type="HOGENOM" id="CLU_099839_1_0_6"/>
<dbReference type="OrthoDB" id="9801447at2"/>
<dbReference type="BioCyc" id="ASP62977:ACIAD_RS14175-MONOMER"/>
<dbReference type="Proteomes" id="UP000000430">
    <property type="component" value="Chromosome"/>
</dbReference>
<dbReference type="GO" id="GO:0005829">
    <property type="term" value="C:cytosol"/>
    <property type="evidence" value="ECO:0007669"/>
    <property type="project" value="TreeGrafter"/>
</dbReference>
<dbReference type="GO" id="GO:0000166">
    <property type="term" value="F:nucleotide binding"/>
    <property type="evidence" value="ECO:0007669"/>
    <property type="project" value="TreeGrafter"/>
</dbReference>
<dbReference type="CDD" id="cd11740">
    <property type="entry name" value="YajQ_like"/>
    <property type="match status" value="1"/>
</dbReference>
<dbReference type="Gene3D" id="3.30.70.860">
    <property type="match status" value="1"/>
</dbReference>
<dbReference type="Gene3D" id="3.30.70.990">
    <property type="entry name" value="YajQ-like, domain 2"/>
    <property type="match status" value="1"/>
</dbReference>
<dbReference type="HAMAP" id="MF_00632">
    <property type="entry name" value="YajQ"/>
    <property type="match status" value="1"/>
</dbReference>
<dbReference type="InterPro" id="IPR007551">
    <property type="entry name" value="DUF520"/>
</dbReference>
<dbReference type="InterPro" id="IPR035571">
    <property type="entry name" value="UPF0234-like_C"/>
</dbReference>
<dbReference type="InterPro" id="IPR035570">
    <property type="entry name" value="UPF0234_N"/>
</dbReference>
<dbReference type="InterPro" id="IPR036183">
    <property type="entry name" value="YajQ-like_sf"/>
</dbReference>
<dbReference type="NCBIfam" id="NF003819">
    <property type="entry name" value="PRK05412.1"/>
    <property type="match status" value="1"/>
</dbReference>
<dbReference type="PANTHER" id="PTHR30476">
    <property type="entry name" value="UPF0234 PROTEIN YAJQ"/>
    <property type="match status" value="1"/>
</dbReference>
<dbReference type="PANTHER" id="PTHR30476:SF0">
    <property type="entry name" value="UPF0234 PROTEIN YAJQ"/>
    <property type="match status" value="1"/>
</dbReference>
<dbReference type="Pfam" id="PF04461">
    <property type="entry name" value="DUF520"/>
    <property type="match status" value="1"/>
</dbReference>
<dbReference type="SUPFAM" id="SSF89963">
    <property type="entry name" value="YajQ-like"/>
    <property type="match status" value="2"/>
</dbReference>
<proteinExistence type="inferred from homology"/>
<reference key="1">
    <citation type="journal article" date="2004" name="Nucleic Acids Res.">
        <title>Unique features revealed by the genome sequence of Acinetobacter sp. ADP1, a versatile and naturally transformation competent bacterium.</title>
        <authorList>
            <person name="Barbe V."/>
            <person name="Vallenet D."/>
            <person name="Fonknechten N."/>
            <person name="Kreimeyer A."/>
            <person name="Oztas S."/>
            <person name="Labarre L."/>
            <person name="Cruveiller S."/>
            <person name="Robert C."/>
            <person name="Duprat S."/>
            <person name="Wincker P."/>
            <person name="Ornston L.N."/>
            <person name="Weissenbach J."/>
            <person name="Marliere P."/>
            <person name="Cohen G.N."/>
            <person name="Medigue C."/>
        </authorList>
    </citation>
    <scope>NUCLEOTIDE SEQUENCE [LARGE SCALE GENOMIC DNA]</scope>
    <source>
        <strain>ATCC 33305 / BD413 / ADP1</strain>
    </source>
</reference>
<evidence type="ECO:0000255" key="1">
    <source>
        <dbReference type="HAMAP-Rule" id="MF_00632"/>
    </source>
</evidence>
<accession>Q6F7Y7</accession>
<gene>
    <name type="ordered locus">ACIAD3137</name>
</gene>
<name>Y3137_ACIAD</name>
<protein>
    <recommendedName>
        <fullName evidence="1">Nucleotide-binding protein ACIAD3137</fullName>
    </recommendedName>
</protein>
<sequence>MPSFDIVSELELFEVNHAVQNTQKEIQTRFDFRGQDVSIELNEKSKEIKISTESDFQCEQVYSMLENHFYKRKIDVQALDPQKATASGKNVVQVIKLKDGLDSDTAKKINKAIKESGIKVQSSIQGDKIRVTDKKRDTLQQVMTFLREQQFGLPLQFNNFKD</sequence>
<organism>
    <name type="scientific">Acinetobacter baylyi (strain ATCC 33305 / BD413 / ADP1)</name>
    <dbReference type="NCBI Taxonomy" id="62977"/>
    <lineage>
        <taxon>Bacteria</taxon>
        <taxon>Pseudomonadati</taxon>
        <taxon>Pseudomonadota</taxon>
        <taxon>Gammaproteobacteria</taxon>
        <taxon>Moraxellales</taxon>
        <taxon>Moraxellaceae</taxon>
        <taxon>Acinetobacter</taxon>
    </lineage>
</organism>
<keyword id="KW-0547">Nucleotide-binding</keyword>
<comment type="function">
    <text evidence="1">Nucleotide-binding protein.</text>
</comment>
<comment type="similarity">
    <text evidence="1">Belongs to the YajQ family.</text>
</comment>
<feature type="chain" id="PRO_0000261910" description="Nucleotide-binding protein ACIAD3137">
    <location>
        <begin position="1"/>
        <end position="162"/>
    </location>
</feature>